<gene>
    <name type="primary">ZNF860</name>
</gene>
<accession>A6NHJ4</accession>
<accession>B4DFA4</accession>
<comment type="function">
    <text evidence="1">May be involved in transcriptional regulation.</text>
</comment>
<comment type="interaction">
    <interactant intactId="EBI-17263060">
        <id>A6NHJ4</id>
    </interactant>
    <interactant intactId="EBI-739624">
        <id>Q8NHQ1</id>
        <label>CEP70</label>
    </interactant>
    <organismsDiffer>false</organismsDiffer>
    <experiments>3</experiments>
</comment>
<comment type="interaction">
    <interactant intactId="EBI-17263060">
        <id>A6NHJ4</id>
    </interactant>
    <interactant intactId="EBI-10172052">
        <id>P60411</id>
        <label>KRTAP10-9</label>
    </interactant>
    <organismsDiffer>false</organismsDiffer>
    <experiments>3</experiments>
</comment>
<comment type="subcellular location">
    <subcellularLocation>
        <location evidence="1">Nucleus</location>
    </subcellularLocation>
</comment>
<comment type="similarity">
    <text evidence="4">Belongs to the krueppel C2H2-type zinc-finger protein family.</text>
</comment>
<protein>
    <recommendedName>
        <fullName>Zinc finger protein 860</fullName>
    </recommendedName>
</protein>
<organism>
    <name type="scientific">Homo sapiens</name>
    <name type="common">Human</name>
    <dbReference type="NCBI Taxonomy" id="9606"/>
    <lineage>
        <taxon>Eukaryota</taxon>
        <taxon>Metazoa</taxon>
        <taxon>Chordata</taxon>
        <taxon>Craniata</taxon>
        <taxon>Vertebrata</taxon>
        <taxon>Euteleostomi</taxon>
        <taxon>Mammalia</taxon>
        <taxon>Eutheria</taxon>
        <taxon>Euarchontoglires</taxon>
        <taxon>Primates</taxon>
        <taxon>Haplorrhini</taxon>
        <taxon>Catarrhini</taxon>
        <taxon>Hominidae</taxon>
        <taxon>Homo</taxon>
    </lineage>
</organism>
<feature type="chain" id="PRO_0000350815" description="Zinc finger protein 860">
    <location>
        <begin position="1"/>
        <end position="632"/>
    </location>
</feature>
<feature type="domain" description="KRAB" evidence="3">
    <location>
        <begin position="24"/>
        <end position="99"/>
    </location>
</feature>
<feature type="zinc finger region" description="C2H2-type 1; degenerate" evidence="2">
    <location>
        <begin position="230"/>
        <end position="252"/>
    </location>
</feature>
<feature type="zinc finger region" description="C2H2-type 2" evidence="2">
    <location>
        <begin position="258"/>
        <end position="280"/>
    </location>
</feature>
<feature type="zinc finger region" description="C2H2-type 3" evidence="2">
    <location>
        <begin position="286"/>
        <end position="308"/>
    </location>
</feature>
<feature type="zinc finger region" description="C2H2-type 4" evidence="2">
    <location>
        <begin position="314"/>
        <end position="336"/>
    </location>
</feature>
<feature type="zinc finger region" description="C2H2-type 5" evidence="2">
    <location>
        <begin position="342"/>
        <end position="364"/>
    </location>
</feature>
<feature type="zinc finger region" description="C2H2-type 6" evidence="2">
    <location>
        <begin position="370"/>
        <end position="392"/>
    </location>
</feature>
<feature type="zinc finger region" description="C2H2-type 7" evidence="2">
    <location>
        <begin position="398"/>
        <end position="420"/>
    </location>
</feature>
<feature type="zinc finger region" description="C2H2-type 8" evidence="2">
    <location>
        <begin position="426"/>
        <end position="448"/>
    </location>
</feature>
<feature type="zinc finger region" description="C2H2-type 9" evidence="2">
    <location>
        <begin position="454"/>
        <end position="476"/>
    </location>
</feature>
<feature type="zinc finger region" description="C2H2-type 10" evidence="2">
    <location>
        <begin position="482"/>
        <end position="504"/>
    </location>
</feature>
<feature type="zinc finger region" description="C2H2-type 11" evidence="2">
    <location>
        <begin position="510"/>
        <end position="532"/>
    </location>
</feature>
<feature type="zinc finger region" description="C2H2-type 12" evidence="2">
    <location>
        <begin position="538"/>
        <end position="560"/>
    </location>
</feature>
<feature type="zinc finger region" description="C2H2-type 13; degenerate" evidence="2">
    <location>
        <begin position="566"/>
        <end position="588"/>
    </location>
</feature>
<feature type="zinc finger region" description="C2H2-type 14" evidence="2">
    <location>
        <begin position="594"/>
        <end position="616"/>
    </location>
</feature>
<feature type="cross-link" description="Glycyl lysine isopeptide (Lys-Gly) (interchain with G-Cter in SUMO2)" evidence="5">
    <location>
        <position position="220"/>
    </location>
</feature>
<feature type="sequence conflict" description="In Ref. 1; BAG57365." evidence="4" ref="1">
    <original>F</original>
    <variation>Y</variation>
    <location>
        <position position="547"/>
    </location>
</feature>
<feature type="sequence conflict" description="In Ref. 1; BAG57365." evidence="4" ref="1">
    <original>R</original>
    <variation>K</variation>
    <location>
        <position position="586"/>
    </location>
</feature>
<keyword id="KW-0238">DNA-binding</keyword>
<keyword id="KW-1017">Isopeptide bond</keyword>
<keyword id="KW-0479">Metal-binding</keyword>
<keyword id="KW-0539">Nucleus</keyword>
<keyword id="KW-1267">Proteomics identification</keyword>
<keyword id="KW-1185">Reference proteome</keyword>
<keyword id="KW-0677">Repeat</keyword>
<keyword id="KW-0804">Transcription</keyword>
<keyword id="KW-0805">Transcription regulation</keyword>
<keyword id="KW-0832">Ubl conjugation</keyword>
<keyword id="KW-0862">Zinc</keyword>
<keyword id="KW-0863">Zinc-finger</keyword>
<reference key="1">
    <citation type="journal article" date="2004" name="Nat. Genet.">
        <title>Complete sequencing and characterization of 21,243 full-length human cDNAs.</title>
        <authorList>
            <person name="Ota T."/>
            <person name="Suzuki Y."/>
            <person name="Nishikawa T."/>
            <person name="Otsuki T."/>
            <person name="Sugiyama T."/>
            <person name="Irie R."/>
            <person name="Wakamatsu A."/>
            <person name="Hayashi K."/>
            <person name="Sato H."/>
            <person name="Nagai K."/>
            <person name="Kimura K."/>
            <person name="Makita H."/>
            <person name="Sekine M."/>
            <person name="Obayashi M."/>
            <person name="Nishi T."/>
            <person name="Shibahara T."/>
            <person name="Tanaka T."/>
            <person name="Ishii S."/>
            <person name="Yamamoto J."/>
            <person name="Saito K."/>
            <person name="Kawai Y."/>
            <person name="Isono Y."/>
            <person name="Nakamura Y."/>
            <person name="Nagahari K."/>
            <person name="Murakami K."/>
            <person name="Yasuda T."/>
            <person name="Iwayanagi T."/>
            <person name="Wagatsuma M."/>
            <person name="Shiratori A."/>
            <person name="Sudo H."/>
            <person name="Hosoiri T."/>
            <person name="Kaku Y."/>
            <person name="Kodaira H."/>
            <person name="Kondo H."/>
            <person name="Sugawara M."/>
            <person name="Takahashi M."/>
            <person name="Kanda K."/>
            <person name="Yokoi T."/>
            <person name="Furuya T."/>
            <person name="Kikkawa E."/>
            <person name="Omura Y."/>
            <person name="Abe K."/>
            <person name="Kamihara K."/>
            <person name="Katsuta N."/>
            <person name="Sato K."/>
            <person name="Tanikawa M."/>
            <person name="Yamazaki M."/>
            <person name="Ninomiya K."/>
            <person name="Ishibashi T."/>
            <person name="Yamashita H."/>
            <person name="Murakawa K."/>
            <person name="Fujimori K."/>
            <person name="Tanai H."/>
            <person name="Kimata M."/>
            <person name="Watanabe M."/>
            <person name="Hiraoka S."/>
            <person name="Chiba Y."/>
            <person name="Ishida S."/>
            <person name="Ono Y."/>
            <person name="Takiguchi S."/>
            <person name="Watanabe S."/>
            <person name="Yosida M."/>
            <person name="Hotuta T."/>
            <person name="Kusano J."/>
            <person name="Kanehori K."/>
            <person name="Takahashi-Fujii A."/>
            <person name="Hara H."/>
            <person name="Tanase T.-O."/>
            <person name="Nomura Y."/>
            <person name="Togiya S."/>
            <person name="Komai F."/>
            <person name="Hara R."/>
            <person name="Takeuchi K."/>
            <person name="Arita M."/>
            <person name="Imose N."/>
            <person name="Musashino K."/>
            <person name="Yuuki H."/>
            <person name="Oshima A."/>
            <person name="Sasaki N."/>
            <person name="Aotsuka S."/>
            <person name="Yoshikawa Y."/>
            <person name="Matsunawa H."/>
            <person name="Ichihara T."/>
            <person name="Shiohata N."/>
            <person name="Sano S."/>
            <person name="Moriya S."/>
            <person name="Momiyama H."/>
            <person name="Satoh N."/>
            <person name="Takami S."/>
            <person name="Terashima Y."/>
            <person name="Suzuki O."/>
            <person name="Nakagawa S."/>
            <person name="Senoh A."/>
            <person name="Mizoguchi H."/>
            <person name="Goto Y."/>
            <person name="Shimizu F."/>
            <person name="Wakebe H."/>
            <person name="Hishigaki H."/>
            <person name="Watanabe T."/>
            <person name="Sugiyama A."/>
            <person name="Takemoto M."/>
            <person name="Kawakami B."/>
            <person name="Yamazaki M."/>
            <person name="Watanabe K."/>
            <person name="Kumagai A."/>
            <person name="Itakura S."/>
            <person name="Fukuzumi Y."/>
            <person name="Fujimori Y."/>
            <person name="Komiyama M."/>
            <person name="Tashiro H."/>
            <person name="Tanigami A."/>
            <person name="Fujiwara T."/>
            <person name="Ono T."/>
            <person name="Yamada K."/>
            <person name="Fujii Y."/>
            <person name="Ozaki K."/>
            <person name="Hirao M."/>
            <person name="Ohmori Y."/>
            <person name="Kawabata A."/>
            <person name="Hikiji T."/>
            <person name="Kobatake N."/>
            <person name="Inagaki H."/>
            <person name="Ikema Y."/>
            <person name="Okamoto S."/>
            <person name="Okitani R."/>
            <person name="Kawakami T."/>
            <person name="Noguchi S."/>
            <person name="Itoh T."/>
            <person name="Shigeta K."/>
            <person name="Senba T."/>
            <person name="Matsumura K."/>
            <person name="Nakajima Y."/>
            <person name="Mizuno T."/>
            <person name="Morinaga M."/>
            <person name="Sasaki M."/>
            <person name="Togashi T."/>
            <person name="Oyama M."/>
            <person name="Hata H."/>
            <person name="Watanabe M."/>
            <person name="Komatsu T."/>
            <person name="Mizushima-Sugano J."/>
            <person name="Satoh T."/>
            <person name="Shirai Y."/>
            <person name="Takahashi Y."/>
            <person name="Nakagawa K."/>
            <person name="Okumura K."/>
            <person name="Nagase T."/>
            <person name="Nomura N."/>
            <person name="Kikuchi H."/>
            <person name="Masuho Y."/>
            <person name="Yamashita R."/>
            <person name="Nakai K."/>
            <person name="Yada T."/>
            <person name="Nakamura Y."/>
            <person name="Ohara O."/>
            <person name="Isogai T."/>
            <person name="Sugano S."/>
        </authorList>
    </citation>
    <scope>NUCLEOTIDE SEQUENCE [LARGE SCALE MRNA]</scope>
    <source>
        <tissue>Cerebellum</tissue>
    </source>
</reference>
<reference key="2">
    <citation type="journal article" date="2006" name="Nature">
        <title>The DNA sequence, annotation and analysis of human chromosome 3.</title>
        <authorList>
            <person name="Muzny D.M."/>
            <person name="Scherer S.E."/>
            <person name="Kaul R."/>
            <person name="Wang J."/>
            <person name="Yu J."/>
            <person name="Sudbrak R."/>
            <person name="Buhay C.J."/>
            <person name="Chen R."/>
            <person name="Cree A."/>
            <person name="Ding Y."/>
            <person name="Dugan-Rocha S."/>
            <person name="Gill R."/>
            <person name="Gunaratne P."/>
            <person name="Harris R.A."/>
            <person name="Hawes A.C."/>
            <person name="Hernandez J."/>
            <person name="Hodgson A.V."/>
            <person name="Hume J."/>
            <person name="Jackson A."/>
            <person name="Khan Z.M."/>
            <person name="Kovar-Smith C."/>
            <person name="Lewis L.R."/>
            <person name="Lozado R.J."/>
            <person name="Metzker M.L."/>
            <person name="Milosavljevic A."/>
            <person name="Miner G.R."/>
            <person name="Morgan M.B."/>
            <person name="Nazareth L.V."/>
            <person name="Scott G."/>
            <person name="Sodergren E."/>
            <person name="Song X.-Z."/>
            <person name="Steffen D."/>
            <person name="Wei S."/>
            <person name="Wheeler D.A."/>
            <person name="Wright M.W."/>
            <person name="Worley K.C."/>
            <person name="Yuan Y."/>
            <person name="Zhang Z."/>
            <person name="Adams C.Q."/>
            <person name="Ansari-Lari M.A."/>
            <person name="Ayele M."/>
            <person name="Brown M.J."/>
            <person name="Chen G."/>
            <person name="Chen Z."/>
            <person name="Clendenning J."/>
            <person name="Clerc-Blankenburg K.P."/>
            <person name="Chen R."/>
            <person name="Chen Z."/>
            <person name="Davis C."/>
            <person name="Delgado O."/>
            <person name="Dinh H.H."/>
            <person name="Dong W."/>
            <person name="Draper H."/>
            <person name="Ernst S."/>
            <person name="Fu G."/>
            <person name="Gonzalez-Garay M.L."/>
            <person name="Garcia D.K."/>
            <person name="Gillett W."/>
            <person name="Gu J."/>
            <person name="Hao B."/>
            <person name="Haugen E."/>
            <person name="Havlak P."/>
            <person name="He X."/>
            <person name="Hennig S."/>
            <person name="Hu S."/>
            <person name="Huang W."/>
            <person name="Jackson L.R."/>
            <person name="Jacob L.S."/>
            <person name="Kelly S.H."/>
            <person name="Kube M."/>
            <person name="Levy R."/>
            <person name="Li Z."/>
            <person name="Liu B."/>
            <person name="Liu J."/>
            <person name="Liu W."/>
            <person name="Lu J."/>
            <person name="Maheshwari M."/>
            <person name="Nguyen B.-V."/>
            <person name="Okwuonu G.O."/>
            <person name="Palmeiri A."/>
            <person name="Pasternak S."/>
            <person name="Perez L.M."/>
            <person name="Phelps K.A."/>
            <person name="Plopper F.J."/>
            <person name="Qiang B."/>
            <person name="Raymond C."/>
            <person name="Rodriguez R."/>
            <person name="Saenphimmachak C."/>
            <person name="Santibanez J."/>
            <person name="Shen H."/>
            <person name="Shen Y."/>
            <person name="Subramanian S."/>
            <person name="Tabor P.E."/>
            <person name="Verduzco D."/>
            <person name="Waldron L."/>
            <person name="Wang J."/>
            <person name="Wang J."/>
            <person name="Wang Q."/>
            <person name="Williams G.A."/>
            <person name="Wong G.K.-S."/>
            <person name="Yao Z."/>
            <person name="Zhang J."/>
            <person name="Zhang X."/>
            <person name="Zhao G."/>
            <person name="Zhou J."/>
            <person name="Zhou Y."/>
            <person name="Nelson D."/>
            <person name="Lehrach H."/>
            <person name="Reinhardt R."/>
            <person name="Naylor S.L."/>
            <person name="Yang H."/>
            <person name="Olson M."/>
            <person name="Weinstock G."/>
            <person name="Gibbs R.A."/>
        </authorList>
    </citation>
    <scope>NUCLEOTIDE SEQUENCE [LARGE SCALE GENOMIC DNA]</scope>
</reference>
<reference key="3">
    <citation type="journal article" date="2017" name="Nat. Struct. Mol. Biol.">
        <title>Site-specific mapping of the human SUMO proteome reveals co-modification with phosphorylation.</title>
        <authorList>
            <person name="Hendriks I.A."/>
            <person name="Lyon D."/>
            <person name="Young C."/>
            <person name="Jensen L.J."/>
            <person name="Vertegaal A.C."/>
            <person name="Nielsen M.L."/>
        </authorList>
    </citation>
    <scope>SUMOYLATION [LARGE SCALE ANALYSIS] AT LYS-220</scope>
    <scope>IDENTIFICATION BY MASS SPECTROMETRY [LARGE SCALE ANALYSIS]</scope>
</reference>
<dbReference type="EMBL" id="AK294003">
    <property type="protein sequence ID" value="BAG57365.1"/>
    <property type="molecule type" value="mRNA"/>
</dbReference>
<dbReference type="EMBL" id="AC108485">
    <property type="status" value="NOT_ANNOTATED_CDS"/>
    <property type="molecule type" value="Genomic_DNA"/>
</dbReference>
<dbReference type="CCDS" id="CCDS46784.1"/>
<dbReference type="RefSeq" id="NP_001131146.2">
    <property type="nucleotide sequence ID" value="NM_001137674.3"/>
</dbReference>
<dbReference type="RefSeq" id="XP_016861788.1">
    <property type="nucleotide sequence ID" value="XM_017006299.1"/>
</dbReference>
<dbReference type="RefSeq" id="XP_047304028.1">
    <property type="nucleotide sequence ID" value="XM_047448072.1"/>
</dbReference>
<dbReference type="RefSeq" id="XP_047304029.1">
    <property type="nucleotide sequence ID" value="XM_047448073.1"/>
</dbReference>
<dbReference type="RefSeq" id="XP_047304030.1">
    <property type="nucleotide sequence ID" value="XM_047448074.1"/>
</dbReference>
<dbReference type="RefSeq" id="XP_054202402.1">
    <property type="nucleotide sequence ID" value="XM_054346427.1"/>
</dbReference>
<dbReference type="RefSeq" id="XP_054202403.1">
    <property type="nucleotide sequence ID" value="XM_054346428.1"/>
</dbReference>
<dbReference type="RefSeq" id="XP_054202404.1">
    <property type="nucleotide sequence ID" value="XM_054346429.1"/>
</dbReference>
<dbReference type="SMR" id="A6NHJ4"/>
<dbReference type="BioGRID" id="131322">
    <property type="interactions" value="5"/>
</dbReference>
<dbReference type="FunCoup" id="A6NHJ4">
    <property type="interactions" value="2"/>
</dbReference>
<dbReference type="IntAct" id="A6NHJ4">
    <property type="interactions" value="2"/>
</dbReference>
<dbReference type="STRING" id="9606.ENSP00000373274"/>
<dbReference type="iPTMnet" id="A6NHJ4"/>
<dbReference type="PhosphoSitePlus" id="A6NHJ4"/>
<dbReference type="BioMuta" id="ZNF860"/>
<dbReference type="jPOST" id="A6NHJ4"/>
<dbReference type="MassIVE" id="A6NHJ4"/>
<dbReference type="PaxDb" id="9606-ENSP00000373274"/>
<dbReference type="PeptideAtlas" id="A6NHJ4"/>
<dbReference type="ProteomicsDB" id="1202"/>
<dbReference type="Antibodypedia" id="57012">
    <property type="antibodies" value="59 antibodies from 14 providers"/>
</dbReference>
<dbReference type="DNASU" id="344787"/>
<dbReference type="Ensembl" id="ENST00000360311.5">
    <property type="protein sequence ID" value="ENSP00000373274.3"/>
    <property type="gene ID" value="ENSG00000197385.6"/>
</dbReference>
<dbReference type="GeneID" id="344787"/>
<dbReference type="KEGG" id="hsa:344787"/>
<dbReference type="MANE-Select" id="ENST00000360311.5">
    <property type="protein sequence ID" value="ENSP00000373274.3"/>
    <property type="RefSeq nucleotide sequence ID" value="NM_001137674.3"/>
    <property type="RefSeq protein sequence ID" value="NP_001131146.2"/>
</dbReference>
<dbReference type="UCSC" id="uc011axg.3">
    <property type="organism name" value="human"/>
</dbReference>
<dbReference type="AGR" id="HGNC:34513"/>
<dbReference type="CTD" id="344787"/>
<dbReference type="DisGeNET" id="344787"/>
<dbReference type="GeneCards" id="ZNF860"/>
<dbReference type="HGNC" id="HGNC:34513">
    <property type="gene designation" value="ZNF860"/>
</dbReference>
<dbReference type="HPA" id="ENSG00000197385">
    <property type="expression patterns" value="Tissue enhanced (lymphoid)"/>
</dbReference>
<dbReference type="neXtProt" id="NX_A6NHJ4"/>
<dbReference type="OpenTargets" id="ENSG00000197385"/>
<dbReference type="PharmGKB" id="PA164727773"/>
<dbReference type="VEuPathDB" id="HostDB:ENSG00000197385"/>
<dbReference type="eggNOG" id="KOG1721">
    <property type="taxonomic scope" value="Eukaryota"/>
</dbReference>
<dbReference type="GeneTree" id="ENSGT00940000154397"/>
<dbReference type="HOGENOM" id="CLU_002678_44_5_1"/>
<dbReference type="InParanoid" id="A6NHJ4"/>
<dbReference type="OMA" id="NSHEATM"/>
<dbReference type="OrthoDB" id="9474680at2759"/>
<dbReference type="PAN-GO" id="A6NHJ4">
    <property type="GO annotations" value="4 GO annotations based on evolutionary models"/>
</dbReference>
<dbReference type="PhylomeDB" id="A6NHJ4"/>
<dbReference type="TreeFam" id="TF341892"/>
<dbReference type="PathwayCommons" id="A6NHJ4"/>
<dbReference type="Reactome" id="R-HSA-212436">
    <property type="pathway name" value="Generic Transcription Pathway"/>
</dbReference>
<dbReference type="SignaLink" id="A6NHJ4"/>
<dbReference type="BioGRID-ORCS" id="344787">
    <property type="hits" value="11 hits in 1117 CRISPR screens"/>
</dbReference>
<dbReference type="GenomeRNAi" id="344787"/>
<dbReference type="Pharos" id="A6NHJ4">
    <property type="development level" value="Tdark"/>
</dbReference>
<dbReference type="PRO" id="PR:A6NHJ4"/>
<dbReference type="Proteomes" id="UP000005640">
    <property type="component" value="Chromosome 3"/>
</dbReference>
<dbReference type="RNAct" id="A6NHJ4">
    <property type="molecule type" value="protein"/>
</dbReference>
<dbReference type="Bgee" id="ENSG00000197385">
    <property type="expression patterns" value="Expressed in male germ line stem cell (sensu Vertebrata) in testis and 95 other cell types or tissues"/>
</dbReference>
<dbReference type="GO" id="GO:0005634">
    <property type="term" value="C:nucleus"/>
    <property type="evidence" value="ECO:0000318"/>
    <property type="project" value="GO_Central"/>
</dbReference>
<dbReference type="GO" id="GO:0000981">
    <property type="term" value="F:DNA-binding transcription factor activity, RNA polymerase II-specific"/>
    <property type="evidence" value="ECO:0000318"/>
    <property type="project" value="GO_Central"/>
</dbReference>
<dbReference type="GO" id="GO:0000978">
    <property type="term" value="F:RNA polymerase II cis-regulatory region sequence-specific DNA binding"/>
    <property type="evidence" value="ECO:0000318"/>
    <property type="project" value="GO_Central"/>
</dbReference>
<dbReference type="GO" id="GO:0008270">
    <property type="term" value="F:zinc ion binding"/>
    <property type="evidence" value="ECO:0007669"/>
    <property type="project" value="UniProtKB-KW"/>
</dbReference>
<dbReference type="GO" id="GO:0006357">
    <property type="term" value="P:regulation of transcription by RNA polymerase II"/>
    <property type="evidence" value="ECO:0000318"/>
    <property type="project" value="GO_Central"/>
</dbReference>
<dbReference type="CDD" id="cd07765">
    <property type="entry name" value="KRAB_A-box"/>
    <property type="match status" value="1"/>
</dbReference>
<dbReference type="FunFam" id="3.30.160.60:FF:003901">
    <property type="match status" value="1"/>
</dbReference>
<dbReference type="FunFam" id="3.30.160.60:FF:004137">
    <property type="match status" value="2"/>
</dbReference>
<dbReference type="FunFam" id="3.30.160.60:FF:004787">
    <property type="match status" value="1"/>
</dbReference>
<dbReference type="FunFam" id="3.30.160.60:FF:005076">
    <property type="match status" value="1"/>
</dbReference>
<dbReference type="FunFam" id="3.30.160.60:FF:000053">
    <property type="entry name" value="zinc finger protein 182 isoform X1"/>
    <property type="match status" value="1"/>
</dbReference>
<dbReference type="FunFam" id="3.30.160.60:FF:000295">
    <property type="entry name" value="zinc finger protein 19"/>
    <property type="match status" value="2"/>
</dbReference>
<dbReference type="FunFam" id="3.30.160.60:FF:000992">
    <property type="entry name" value="Zinc finger protein 320"/>
    <property type="match status" value="1"/>
</dbReference>
<dbReference type="FunFam" id="3.30.160.60:FF:002402">
    <property type="entry name" value="Zinc finger protein 347"/>
    <property type="match status" value="1"/>
</dbReference>
<dbReference type="FunFam" id="3.30.160.60:FF:000016">
    <property type="entry name" value="zinc finger protein 37 homolog"/>
    <property type="match status" value="1"/>
</dbReference>
<dbReference type="FunFam" id="3.30.160.60:FF:002090">
    <property type="entry name" value="Zinc finger protein 473"/>
    <property type="match status" value="1"/>
</dbReference>
<dbReference type="FunFam" id="3.30.160.60:FF:002289">
    <property type="entry name" value="Zinc finger protein 813"/>
    <property type="match status" value="1"/>
</dbReference>
<dbReference type="FunFam" id="3.30.160.60:FF:002292">
    <property type="entry name" value="Zinc finger protein 816"/>
    <property type="match status" value="1"/>
</dbReference>
<dbReference type="FunFam" id="3.30.160.60:FF:003261">
    <property type="entry name" value="Zinc finger protein 860"/>
    <property type="match status" value="1"/>
</dbReference>
<dbReference type="FunFam" id="3.30.160.60:FF:000416">
    <property type="entry name" value="zinc finger protein 879 isoform X1"/>
    <property type="match status" value="1"/>
</dbReference>
<dbReference type="Gene3D" id="6.10.140.140">
    <property type="match status" value="1"/>
</dbReference>
<dbReference type="Gene3D" id="3.30.160.60">
    <property type="entry name" value="Classic Zinc Finger"/>
    <property type="match status" value="14"/>
</dbReference>
<dbReference type="InterPro" id="IPR001909">
    <property type="entry name" value="KRAB"/>
</dbReference>
<dbReference type="InterPro" id="IPR036051">
    <property type="entry name" value="KRAB_dom_sf"/>
</dbReference>
<dbReference type="InterPro" id="IPR036236">
    <property type="entry name" value="Znf_C2H2_sf"/>
</dbReference>
<dbReference type="InterPro" id="IPR013087">
    <property type="entry name" value="Znf_C2H2_type"/>
</dbReference>
<dbReference type="PANTHER" id="PTHR23235:SF178">
    <property type="entry name" value="C2H2-TYPE DOMAIN-CONTAINING PROTEIN-RELATED"/>
    <property type="match status" value="1"/>
</dbReference>
<dbReference type="PANTHER" id="PTHR23235">
    <property type="entry name" value="KRUEPPEL-LIKE TRANSCRIPTION FACTOR"/>
    <property type="match status" value="1"/>
</dbReference>
<dbReference type="Pfam" id="PF01352">
    <property type="entry name" value="KRAB"/>
    <property type="match status" value="1"/>
</dbReference>
<dbReference type="Pfam" id="PF00096">
    <property type="entry name" value="zf-C2H2"/>
    <property type="match status" value="11"/>
</dbReference>
<dbReference type="SMART" id="SM00349">
    <property type="entry name" value="KRAB"/>
    <property type="match status" value="1"/>
</dbReference>
<dbReference type="SMART" id="SM00355">
    <property type="entry name" value="ZnF_C2H2"/>
    <property type="match status" value="12"/>
</dbReference>
<dbReference type="SUPFAM" id="SSF57667">
    <property type="entry name" value="beta-beta-alpha zinc fingers"/>
    <property type="match status" value="8"/>
</dbReference>
<dbReference type="SUPFAM" id="SSF109640">
    <property type="entry name" value="KRAB domain (Kruppel-associated box)"/>
    <property type="match status" value="1"/>
</dbReference>
<dbReference type="PROSITE" id="PS50805">
    <property type="entry name" value="KRAB"/>
    <property type="match status" value="1"/>
</dbReference>
<dbReference type="PROSITE" id="PS00028">
    <property type="entry name" value="ZINC_FINGER_C2H2_1"/>
    <property type="match status" value="12"/>
</dbReference>
<dbReference type="PROSITE" id="PS50157">
    <property type="entry name" value="ZINC_FINGER_C2H2_2"/>
    <property type="match status" value="14"/>
</dbReference>
<sequence>MLREEAAQKRKEKEPGMALPQGHLTFRDVAIEFSLEEWKCLDPTQRALYRAMMLENYRNLHSVDISSKCMMKKFSSTAQGNTEVDTGTLERHESHHIGDFCFQKIGKDIHDFEFQWQEDKRNSHEATMTQIKKLTGSTDRYDRRHPGNKPIKDQLGLSFHSHLPELHIFQTKGKVGNQVEKSINDASSVLTSQRISSRPKIHISNNYENNFFHSSLLTLKQEVHIREKSFQCNESGKAFNCSSLLRKHQIIYLGGKQYKCDVCGKVFNQKRYLACHHRCHTGEKPYKCNECGKVFNQQSNLASHHRLHTGEKPYKCEECDKVFSRKSNLERHRRIHTGEKPYKCKVCEKAFRRDSHLTQHTRIHTGEKPYKCNECGKAFSGQSTLIHHQAIHGIGKLYKCNDCHKVFSNATTIANHWRIHNEERSYKCNKCGKFFRRRSYLVVHWRTHTGEKPYKCNECGKTFHHNSALVIHKAIHTGEKPYKCNECGKTFRHNSALVIHKAIHTGEKPYKCNECGKVFNQQATLARHHRLHTGEKPYKCEECDTVFSRKSHHETHKRIHTGEKPYKCDDFDEAFSQASSYAKQRRIHMGEKHHKCDDCGKAFTSHSHRIRHQRIHTGQKSYKCHKRGKVFS</sequence>
<name>ZN860_HUMAN</name>
<evidence type="ECO:0000250" key="1"/>
<evidence type="ECO:0000255" key="2">
    <source>
        <dbReference type="PROSITE-ProRule" id="PRU00042"/>
    </source>
</evidence>
<evidence type="ECO:0000255" key="3">
    <source>
        <dbReference type="PROSITE-ProRule" id="PRU00119"/>
    </source>
</evidence>
<evidence type="ECO:0000305" key="4"/>
<evidence type="ECO:0007744" key="5">
    <source>
    </source>
</evidence>
<proteinExistence type="evidence at protein level"/>